<accession>Q9VTC2</accession>
<comment type="function">
    <text evidence="1">Component of the biogenesis of lysosome-related organelles complex-1 (BLOC-1) involved in pigment granule biogenesis.</text>
</comment>
<comment type="subunit">
    <text evidence="1">Component of the biogenesis of lysosome-related organelles complex-1 (BLOC-1) composed of Blos1, Blos2, Blos3, Blos4, Dysb, Muted, Pldn and Snapin. Interacts with Pldn.</text>
</comment>
<comment type="interaction">
    <interactant intactId="EBI-122095">
        <id>Q9VTC2</id>
    </interactant>
    <interactant intactId="EBI-173665">
        <id>Q4V5L1</id>
        <label>Dmel\CG15124</label>
    </interactant>
    <organismsDiffer>false</organismsDiffer>
    <experiments>3</experiments>
</comment>
<comment type="similarity">
    <text evidence="2">Belongs to the BLOC1S4 family.</text>
</comment>
<gene>
    <name evidence="3" type="primary">Blos4</name>
    <name evidence="3" type="ORF">CG14149</name>
</gene>
<name>BL1S4_DROME</name>
<proteinExistence type="evidence at protein level"/>
<dbReference type="EMBL" id="AE014296">
    <property type="protein sequence ID" value="AAF50130.1"/>
    <property type="molecule type" value="Genomic_DNA"/>
</dbReference>
<dbReference type="EMBL" id="AY071122">
    <property type="protein sequence ID" value="AAL48744.1"/>
    <property type="molecule type" value="mRNA"/>
</dbReference>
<dbReference type="RefSeq" id="NP_001261689.1">
    <property type="nucleotide sequence ID" value="NM_001274760.1"/>
</dbReference>
<dbReference type="RefSeq" id="NP_648414.1">
    <property type="nucleotide sequence ID" value="NM_140157.3"/>
</dbReference>
<dbReference type="SMR" id="Q9VTC2"/>
<dbReference type="BioGRID" id="64596">
    <property type="interactions" value="10"/>
</dbReference>
<dbReference type="ComplexPortal" id="CPX-2753">
    <property type="entry name" value="BLOC-1 complex"/>
</dbReference>
<dbReference type="FunCoup" id="Q9VTC2">
    <property type="interactions" value="99"/>
</dbReference>
<dbReference type="IntAct" id="Q9VTC2">
    <property type="interactions" value="8"/>
</dbReference>
<dbReference type="STRING" id="7227.FBpp0075998"/>
<dbReference type="PaxDb" id="7227-FBpp0075998"/>
<dbReference type="DNASU" id="39219"/>
<dbReference type="EnsemblMetazoa" id="FBtr0076269">
    <property type="protein sequence ID" value="FBpp0075998"/>
    <property type="gene ID" value="FBgn0036105"/>
</dbReference>
<dbReference type="EnsemblMetazoa" id="FBtr0333403">
    <property type="protein sequence ID" value="FBpp0305595"/>
    <property type="gene ID" value="FBgn0036105"/>
</dbReference>
<dbReference type="GeneID" id="39219"/>
<dbReference type="KEGG" id="dme:Dmel_CG14149"/>
<dbReference type="UCSC" id="CG14149-RA">
    <property type="organism name" value="d. melanogaster"/>
</dbReference>
<dbReference type="AGR" id="FB:FBgn0036105"/>
<dbReference type="CTD" id="39219"/>
<dbReference type="FlyBase" id="FBgn0036105">
    <property type="gene designation" value="Blos4"/>
</dbReference>
<dbReference type="VEuPathDB" id="VectorBase:FBgn0036105"/>
<dbReference type="eggNOG" id="ENOG502SAED">
    <property type="taxonomic scope" value="Eukaryota"/>
</dbReference>
<dbReference type="GeneTree" id="ENSGT00390000006790"/>
<dbReference type="HOGENOM" id="CLU_096507_1_0_1"/>
<dbReference type="InParanoid" id="Q9VTC2"/>
<dbReference type="OMA" id="CTNIDDM"/>
<dbReference type="OrthoDB" id="2372305at2759"/>
<dbReference type="PhylomeDB" id="Q9VTC2"/>
<dbReference type="BioGRID-ORCS" id="39219">
    <property type="hits" value="0 hits in 3 CRISPR screens"/>
</dbReference>
<dbReference type="GenomeRNAi" id="39219"/>
<dbReference type="PRO" id="PR:Q9VTC2"/>
<dbReference type="Proteomes" id="UP000000803">
    <property type="component" value="Chromosome 3L"/>
</dbReference>
<dbReference type="Bgee" id="FBgn0036105">
    <property type="expression patterns" value="Expressed in male accessory gland main cell (Drosophila) in male reproductive gland and 67 other cell types or tissues"/>
</dbReference>
<dbReference type="ExpressionAtlas" id="Q9VTC2">
    <property type="expression patterns" value="baseline and differential"/>
</dbReference>
<dbReference type="GO" id="GO:0031083">
    <property type="term" value="C:BLOC-1 complex"/>
    <property type="evidence" value="ECO:0000250"/>
    <property type="project" value="FlyBase"/>
</dbReference>
<dbReference type="GO" id="GO:0008057">
    <property type="term" value="P:eye pigment granule organization"/>
    <property type="evidence" value="ECO:0000315"/>
    <property type="project" value="UniProtKB"/>
</dbReference>
<dbReference type="InterPro" id="IPR024857">
    <property type="entry name" value="Cappuccino"/>
</dbReference>
<dbReference type="PANTHER" id="PTHR16230:SF3">
    <property type="entry name" value="BIOGENESIS OF LYSOSOMAL ORGANELLES COMPLEX-1, SUBUNIT 4, CAPPUCCINO"/>
    <property type="match status" value="1"/>
</dbReference>
<dbReference type="PANTHER" id="PTHR16230">
    <property type="entry name" value="CAPPUCCINO"/>
    <property type="match status" value="1"/>
</dbReference>
<protein>
    <recommendedName>
        <fullName>Biogenesis of lysosome-related organelles complex 1 subunit 4</fullName>
        <shortName>BLOC-1 subunit 4</shortName>
    </recommendedName>
    <alternativeName>
        <fullName>Protein cappuccino homolog</fullName>
    </alternativeName>
</protein>
<reference key="1">
    <citation type="journal article" date="2000" name="Science">
        <title>The genome sequence of Drosophila melanogaster.</title>
        <authorList>
            <person name="Adams M.D."/>
            <person name="Celniker S.E."/>
            <person name="Holt R.A."/>
            <person name="Evans C.A."/>
            <person name="Gocayne J.D."/>
            <person name="Amanatides P.G."/>
            <person name="Scherer S.E."/>
            <person name="Li P.W."/>
            <person name="Hoskins R.A."/>
            <person name="Galle R.F."/>
            <person name="George R.A."/>
            <person name="Lewis S.E."/>
            <person name="Richards S."/>
            <person name="Ashburner M."/>
            <person name="Henderson S.N."/>
            <person name="Sutton G.G."/>
            <person name="Wortman J.R."/>
            <person name="Yandell M.D."/>
            <person name="Zhang Q."/>
            <person name="Chen L.X."/>
            <person name="Brandon R.C."/>
            <person name="Rogers Y.-H.C."/>
            <person name="Blazej R.G."/>
            <person name="Champe M."/>
            <person name="Pfeiffer B.D."/>
            <person name="Wan K.H."/>
            <person name="Doyle C."/>
            <person name="Baxter E.G."/>
            <person name="Helt G."/>
            <person name="Nelson C.R."/>
            <person name="Miklos G.L.G."/>
            <person name="Abril J.F."/>
            <person name="Agbayani A."/>
            <person name="An H.-J."/>
            <person name="Andrews-Pfannkoch C."/>
            <person name="Baldwin D."/>
            <person name="Ballew R.M."/>
            <person name="Basu A."/>
            <person name="Baxendale J."/>
            <person name="Bayraktaroglu L."/>
            <person name="Beasley E.M."/>
            <person name="Beeson K.Y."/>
            <person name="Benos P.V."/>
            <person name="Berman B.P."/>
            <person name="Bhandari D."/>
            <person name="Bolshakov S."/>
            <person name="Borkova D."/>
            <person name="Botchan M.R."/>
            <person name="Bouck J."/>
            <person name="Brokstein P."/>
            <person name="Brottier P."/>
            <person name="Burtis K.C."/>
            <person name="Busam D.A."/>
            <person name="Butler H."/>
            <person name="Cadieu E."/>
            <person name="Center A."/>
            <person name="Chandra I."/>
            <person name="Cherry J.M."/>
            <person name="Cawley S."/>
            <person name="Dahlke C."/>
            <person name="Davenport L.B."/>
            <person name="Davies P."/>
            <person name="de Pablos B."/>
            <person name="Delcher A."/>
            <person name="Deng Z."/>
            <person name="Mays A.D."/>
            <person name="Dew I."/>
            <person name="Dietz S.M."/>
            <person name="Dodson K."/>
            <person name="Doup L.E."/>
            <person name="Downes M."/>
            <person name="Dugan-Rocha S."/>
            <person name="Dunkov B.C."/>
            <person name="Dunn P."/>
            <person name="Durbin K.J."/>
            <person name="Evangelista C.C."/>
            <person name="Ferraz C."/>
            <person name="Ferriera S."/>
            <person name="Fleischmann W."/>
            <person name="Fosler C."/>
            <person name="Gabrielian A.E."/>
            <person name="Garg N.S."/>
            <person name="Gelbart W.M."/>
            <person name="Glasser K."/>
            <person name="Glodek A."/>
            <person name="Gong F."/>
            <person name="Gorrell J.H."/>
            <person name="Gu Z."/>
            <person name="Guan P."/>
            <person name="Harris M."/>
            <person name="Harris N.L."/>
            <person name="Harvey D.A."/>
            <person name="Heiman T.J."/>
            <person name="Hernandez J.R."/>
            <person name="Houck J."/>
            <person name="Hostin D."/>
            <person name="Houston K.A."/>
            <person name="Howland T.J."/>
            <person name="Wei M.-H."/>
            <person name="Ibegwam C."/>
            <person name="Jalali M."/>
            <person name="Kalush F."/>
            <person name="Karpen G.H."/>
            <person name="Ke Z."/>
            <person name="Kennison J.A."/>
            <person name="Ketchum K.A."/>
            <person name="Kimmel B.E."/>
            <person name="Kodira C.D."/>
            <person name="Kraft C.L."/>
            <person name="Kravitz S."/>
            <person name="Kulp D."/>
            <person name="Lai Z."/>
            <person name="Lasko P."/>
            <person name="Lei Y."/>
            <person name="Levitsky A.A."/>
            <person name="Li J.H."/>
            <person name="Li Z."/>
            <person name="Liang Y."/>
            <person name="Lin X."/>
            <person name="Liu X."/>
            <person name="Mattei B."/>
            <person name="McIntosh T.C."/>
            <person name="McLeod M.P."/>
            <person name="McPherson D."/>
            <person name="Merkulov G."/>
            <person name="Milshina N.V."/>
            <person name="Mobarry C."/>
            <person name="Morris J."/>
            <person name="Moshrefi A."/>
            <person name="Mount S.M."/>
            <person name="Moy M."/>
            <person name="Murphy B."/>
            <person name="Murphy L."/>
            <person name="Muzny D.M."/>
            <person name="Nelson D.L."/>
            <person name="Nelson D.R."/>
            <person name="Nelson K.A."/>
            <person name="Nixon K."/>
            <person name="Nusskern D.R."/>
            <person name="Pacleb J.M."/>
            <person name="Palazzolo M."/>
            <person name="Pittman G.S."/>
            <person name="Pan S."/>
            <person name="Pollard J."/>
            <person name="Puri V."/>
            <person name="Reese M.G."/>
            <person name="Reinert K."/>
            <person name="Remington K."/>
            <person name="Saunders R.D.C."/>
            <person name="Scheeler F."/>
            <person name="Shen H."/>
            <person name="Shue B.C."/>
            <person name="Siden-Kiamos I."/>
            <person name="Simpson M."/>
            <person name="Skupski M.P."/>
            <person name="Smith T.J."/>
            <person name="Spier E."/>
            <person name="Spradling A.C."/>
            <person name="Stapleton M."/>
            <person name="Strong R."/>
            <person name="Sun E."/>
            <person name="Svirskas R."/>
            <person name="Tector C."/>
            <person name="Turner R."/>
            <person name="Venter E."/>
            <person name="Wang A.H."/>
            <person name="Wang X."/>
            <person name="Wang Z.-Y."/>
            <person name="Wassarman D.A."/>
            <person name="Weinstock G.M."/>
            <person name="Weissenbach J."/>
            <person name="Williams S.M."/>
            <person name="Woodage T."/>
            <person name="Worley K.C."/>
            <person name="Wu D."/>
            <person name="Yang S."/>
            <person name="Yao Q.A."/>
            <person name="Ye J."/>
            <person name="Yeh R.-F."/>
            <person name="Zaveri J.S."/>
            <person name="Zhan M."/>
            <person name="Zhang G."/>
            <person name="Zhao Q."/>
            <person name="Zheng L."/>
            <person name="Zheng X.H."/>
            <person name="Zhong F.N."/>
            <person name="Zhong W."/>
            <person name="Zhou X."/>
            <person name="Zhu S.C."/>
            <person name="Zhu X."/>
            <person name="Smith H.O."/>
            <person name="Gibbs R.A."/>
            <person name="Myers E.W."/>
            <person name="Rubin G.M."/>
            <person name="Venter J.C."/>
        </authorList>
    </citation>
    <scope>NUCLEOTIDE SEQUENCE [LARGE SCALE GENOMIC DNA]</scope>
    <source>
        <strain>Berkeley</strain>
    </source>
</reference>
<reference key="2">
    <citation type="journal article" date="2002" name="Genome Biol.">
        <title>Annotation of the Drosophila melanogaster euchromatic genome: a systematic review.</title>
        <authorList>
            <person name="Misra S."/>
            <person name="Crosby M.A."/>
            <person name="Mungall C.J."/>
            <person name="Matthews B.B."/>
            <person name="Campbell K.S."/>
            <person name="Hradecky P."/>
            <person name="Huang Y."/>
            <person name="Kaminker J.S."/>
            <person name="Millburn G.H."/>
            <person name="Prochnik S.E."/>
            <person name="Smith C.D."/>
            <person name="Tupy J.L."/>
            <person name="Whitfield E.J."/>
            <person name="Bayraktaroglu L."/>
            <person name="Berman B.P."/>
            <person name="Bettencourt B.R."/>
            <person name="Celniker S.E."/>
            <person name="de Grey A.D.N.J."/>
            <person name="Drysdale R.A."/>
            <person name="Harris N.L."/>
            <person name="Richter J."/>
            <person name="Russo S."/>
            <person name="Schroeder A.J."/>
            <person name="Shu S.Q."/>
            <person name="Stapleton M."/>
            <person name="Yamada C."/>
            <person name="Ashburner M."/>
            <person name="Gelbart W.M."/>
            <person name="Rubin G.M."/>
            <person name="Lewis S.E."/>
        </authorList>
    </citation>
    <scope>GENOME REANNOTATION</scope>
    <source>
        <strain>Berkeley</strain>
    </source>
</reference>
<reference key="3">
    <citation type="journal article" date="2002" name="Genome Biol.">
        <title>A Drosophila full-length cDNA resource.</title>
        <authorList>
            <person name="Stapleton M."/>
            <person name="Carlson J.W."/>
            <person name="Brokstein P."/>
            <person name="Yu C."/>
            <person name="Champe M."/>
            <person name="George R.A."/>
            <person name="Guarin H."/>
            <person name="Kronmiller B."/>
            <person name="Pacleb J.M."/>
            <person name="Park S."/>
            <person name="Wan K.H."/>
            <person name="Rubin G.M."/>
            <person name="Celniker S.E."/>
        </authorList>
    </citation>
    <scope>NUCLEOTIDE SEQUENCE [LARGE SCALE MRNA]</scope>
    <source>
        <strain>Berkeley</strain>
    </source>
</reference>
<reference key="4">
    <citation type="journal article" date="2010" name="Hum. Mol. Genet.">
        <title>Genetic modifiers of abnormal organelle biogenesis in a Drosophila model of BLOC-1 deficiency.</title>
        <authorList>
            <person name="Cheli V.T."/>
            <person name="Daniels R.W."/>
            <person name="Godoy R."/>
            <person name="Hoyle D.J."/>
            <person name="Kandachar V."/>
            <person name="Starcevic M."/>
            <person name="Martinez-Agosto J.A."/>
            <person name="Poole S."/>
            <person name="DiAntonio A."/>
            <person name="Lloyd V.K."/>
            <person name="Chang H.C."/>
            <person name="Krantz D.E."/>
            <person name="Dell'Angelica E.C."/>
        </authorList>
    </citation>
    <scope>IDENTIFICATION IN THE BLOC-1 COMPLEX</scope>
    <scope>FUNCTION</scope>
    <scope>INTERACTION WITH PLDN</scope>
</reference>
<organism>
    <name type="scientific">Drosophila melanogaster</name>
    <name type="common">Fruit fly</name>
    <dbReference type="NCBI Taxonomy" id="7227"/>
    <lineage>
        <taxon>Eukaryota</taxon>
        <taxon>Metazoa</taxon>
        <taxon>Ecdysozoa</taxon>
        <taxon>Arthropoda</taxon>
        <taxon>Hexapoda</taxon>
        <taxon>Insecta</taxon>
        <taxon>Pterygota</taxon>
        <taxon>Neoptera</taxon>
        <taxon>Endopterygota</taxon>
        <taxon>Diptera</taxon>
        <taxon>Brachycera</taxon>
        <taxon>Muscomorpha</taxon>
        <taxon>Ephydroidea</taxon>
        <taxon>Drosophilidae</taxon>
        <taxon>Drosophila</taxon>
        <taxon>Sophophora</taxon>
    </lineage>
</organism>
<evidence type="ECO:0000269" key="1">
    <source>
    </source>
</evidence>
<evidence type="ECO:0000305" key="2"/>
<evidence type="ECO:0000312" key="3">
    <source>
        <dbReference type="FlyBase" id="FBgn0036105"/>
    </source>
</evidence>
<keyword id="KW-1185">Reference proteome</keyword>
<feature type="chain" id="PRO_0000420196" description="Biogenesis of lysosome-related organelles complex 1 subunit 4">
    <location>
        <begin position="1"/>
        <end position="169"/>
    </location>
</feature>
<sequence length="169" mass="18851">MQSNIENVSRDYAKILQSADLEKEINPLCTNIEDMLARLDEFETLLASVRAESNGMMANNVCSILGFTDSFEQLKARIDGLEQCVGVVSANLSEVERSVDIAEEELHVTDYSLKGLLLKPLKAKLSASDTSTLSSLPRSNLVEEEYQPVEIYKSDDYFGKSEEENYVAK</sequence>